<reference key="1">
    <citation type="submission" date="2002-12" db="EMBL/GenBank/DDBJ databases">
        <title>Complete genome sequence of Vibrio vulnificus CMCP6.</title>
        <authorList>
            <person name="Rhee J.H."/>
            <person name="Kim S.Y."/>
            <person name="Chung S.S."/>
            <person name="Kim J.J."/>
            <person name="Moon Y.H."/>
            <person name="Jeong H."/>
            <person name="Choy H.E."/>
        </authorList>
    </citation>
    <scope>NUCLEOTIDE SEQUENCE [LARGE SCALE GENOMIC DNA]</scope>
    <source>
        <strain>CMCP6</strain>
    </source>
</reference>
<accession>Q8D9G5</accession>
<proteinExistence type="inferred from homology"/>
<organism>
    <name type="scientific">Vibrio vulnificus (strain CMCP6)</name>
    <dbReference type="NCBI Taxonomy" id="216895"/>
    <lineage>
        <taxon>Bacteria</taxon>
        <taxon>Pseudomonadati</taxon>
        <taxon>Pseudomonadota</taxon>
        <taxon>Gammaproteobacteria</taxon>
        <taxon>Vibrionales</taxon>
        <taxon>Vibrionaceae</taxon>
        <taxon>Vibrio</taxon>
    </lineage>
</organism>
<keyword id="KW-1003">Cell membrane</keyword>
<keyword id="KW-0285">Flavoprotein</keyword>
<keyword id="KW-0288">FMN</keyword>
<keyword id="KW-0472">Membrane</keyword>
<keyword id="KW-0560">Oxidoreductase</keyword>
<keyword id="KW-0665">Pyrimidine biosynthesis</keyword>
<evidence type="ECO:0000255" key="1">
    <source>
        <dbReference type="HAMAP-Rule" id="MF_00225"/>
    </source>
</evidence>
<dbReference type="EC" id="1.3.5.2" evidence="1"/>
<dbReference type="EMBL" id="AE016795">
    <property type="protein sequence ID" value="AAO10985.1"/>
    <property type="molecule type" value="Genomic_DNA"/>
</dbReference>
<dbReference type="RefSeq" id="WP_011080481.1">
    <property type="nucleotide sequence ID" value="NC_004459.3"/>
</dbReference>
<dbReference type="SMR" id="Q8D9G5"/>
<dbReference type="GeneID" id="93896880"/>
<dbReference type="KEGG" id="vvu:VV1_2637"/>
<dbReference type="HOGENOM" id="CLU_013640_2_0_6"/>
<dbReference type="UniPathway" id="UPA00070">
    <property type="reaction ID" value="UER00946"/>
</dbReference>
<dbReference type="Proteomes" id="UP000002275">
    <property type="component" value="Chromosome 1"/>
</dbReference>
<dbReference type="GO" id="GO:0005737">
    <property type="term" value="C:cytoplasm"/>
    <property type="evidence" value="ECO:0007669"/>
    <property type="project" value="InterPro"/>
</dbReference>
<dbReference type="GO" id="GO:0005886">
    <property type="term" value="C:plasma membrane"/>
    <property type="evidence" value="ECO:0007669"/>
    <property type="project" value="UniProtKB-SubCell"/>
</dbReference>
<dbReference type="GO" id="GO:0106430">
    <property type="term" value="F:dihydroorotate dehydrogenase (quinone) activity"/>
    <property type="evidence" value="ECO:0007669"/>
    <property type="project" value="UniProtKB-EC"/>
</dbReference>
<dbReference type="GO" id="GO:0006207">
    <property type="term" value="P:'de novo' pyrimidine nucleobase biosynthetic process"/>
    <property type="evidence" value="ECO:0007669"/>
    <property type="project" value="InterPro"/>
</dbReference>
<dbReference type="GO" id="GO:0044205">
    <property type="term" value="P:'de novo' UMP biosynthetic process"/>
    <property type="evidence" value="ECO:0007669"/>
    <property type="project" value="UniProtKB-UniRule"/>
</dbReference>
<dbReference type="CDD" id="cd04738">
    <property type="entry name" value="DHOD_2_like"/>
    <property type="match status" value="1"/>
</dbReference>
<dbReference type="FunFam" id="3.20.20.70:FF:000028">
    <property type="entry name" value="Dihydroorotate dehydrogenase (quinone)"/>
    <property type="match status" value="1"/>
</dbReference>
<dbReference type="Gene3D" id="3.20.20.70">
    <property type="entry name" value="Aldolase class I"/>
    <property type="match status" value="1"/>
</dbReference>
<dbReference type="HAMAP" id="MF_00225">
    <property type="entry name" value="DHO_dh_type2"/>
    <property type="match status" value="1"/>
</dbReference>
<dbReference type="InterPro" id="IPR013785">
    <property type="entry name" value="Aldolase_TIM"/>
</dbReference>
<dbReference type="InterPro" id="IPR050074">
    <property type="entry name" value="DHO_dehydrogenase"/>
</dbReference>
<dbReference type="InterPro" id="IPR012135">
    <property type="entry name" value="Dihydroorotate_DH_1_2"/>
</dbReference>
<dbReference type="InterPro" id="IPR005719">
    <property type="entry name" value="Dihydroorotate_DH_2"/>
</dbReference>
<dbReference type="InterPro" id="IPR005720">
    <property type="entry name" value="Dihydroorotate_DH_cat"/>
</dbReference>
<dbReference type="InterPro" id="IPR001295">
    <property type="entry name" value="Dihydroorotate_DH_CS"/>
</dbReference>
<dbReference type="NCBIfam" id="NF003644">
    <property type="entry name" value="PRK05286.1-1"/>
    <property type="match status" value="1"/>
</dbReference>
<dbReference type="NCBIfam" id="NF003645">
    <property type="entry name" value="PRK05286.1-2"/>
    <property type="match status" value="1"/>
</dbReference>
<dbReference type="NCBIfam" id="NF003646">
    <property type="entry name" value="PRK05286.1-4"/>
    <property type="match status" value="1"/>
</dbReference>
<dbReference type="NCBIfam" id="NF003652">
    <property type="entry name" value="PRK05286.2-5"/>
    <property type="match status" value="1"/>
</dbReference>
<dbReference type="NCBIfam" id="TIGR01036">
    <property type="entry name" value="pyrD_sub2"/>
    <property type="match status" value="1"/>
</dbReference>
<dbReference type="PANTHER" id="PTHR48109:SF4">
    <property type="entry name" value="DIHYDROOROTATE DEHYDROGENASE (QUINONE), MITOCHONDRIAL"/>
    <property type="match status" value="1"/>
</dbReference>
<dbReference type="PANTHER" id="PTHR48109">
    <property type="entry name" value="DIHYDROOROTATE DEHYDROGENASE (QUINONE), MITOCHONDRIAL-RELATED"/>
    <property type="match status" value="1"/>
</dbReference>
<dbReference type="Pfam" id="PF01180">
    <property type="entry name" value="DHO_dh"/>
    <property type="match status" value="1"/>
</dbReference>
<dbReference type="PIRSF" id="PIRSF000164">
    <property type="entry name" value="DHO_oxidase"/>
    <property type="match status" value="1"/>
</dbReference>
<dbReference type="SUPFAM" id="SSF51395">
    <property type="entry name" value="FMN-linked oxidoreductases"/>
    <property type="match status" value="1"/>
</dbReference>
<dbReference type="PROSITE" id="PS00911">
    <property type="entry name" value="DHODEHASE_1"/>
    <property type="match status" value="1"/>
</dbReference>
<dbReference type="PROSITE" id="PS00912">
    <property type="entry name" value="DHODEHASE_2"/>
    <property type="match status" value="1"/>
</dbReference>
<comment type="function">
    <text evidence="1">Catalyzes the conversion of dihydroorotate to orotate with quinone as electron acceptor.</text>
</comment>
<comment type="catalytic activity">
    <reaction evidence="1">
        <text>(S)-dihydroorotate + a quinone = orotate + a quinol</text>
        <dbReference type="Rhea" id="RHEA:30187"/>
        <dbReference type="ChEBI" id="CHEBI:24646"/>
        <dbReference type="ChEBI" id="CHEBI:30839"/>
        <dbReference type="ChEBI" id="CHEBI:30864"/>
        <dbReference type="ChEBI" id="CHEBI:132124"/>
        <dbReference type="EC" id="1.3.5.2"/>
    </reaction>
</comment>
<comment type="cofactor">
    <cofactor evidence="1">
        <name>FMN</name>
        <dbReference type="ChEBI" id="CHEBI:58210"/>
    </cofactor>
    <text evidence="1">Binds 1 FMN per subunit.</text>
</comment>
<comment type="pathway">
    <text evidence="1">Pyrimidine metabolism; UMP biosynthesis via de novo pathway; orotate from (S)-dihydroorotate (quinone route): step 1/1.</text>
</comment>
<comment type="subunit">
    <text evidence="1">Monomer.</text>
</comment>
<comment type="subcellular location">
    <subcellularLocation>
        <location evidence="1">Cell membrane</location>
        <topology evidence="1">Peripheral membrane protein</topology>
    </subcellularLocation>
</comment>
<comment type="similarity">
    <text evidence="1">Belongs to the dihydroorotate dehydrogenase family. Type 2 subfamily.</text>
</comment>
<protein>
    <recommendedName>
        <fullName evidence="1">Dihydroorotate dehydrogenase (quinone)</fullName>
        <ecNumber evidence="1">1.3.5.2</ecNumber>
    </recommendedName>
    <alternativeName>
        <fullName evidence="1">DHOdehase</fullName>
        <shortName evidence="1">DHOD</shortName>
        <shortName evidence="1">DHODase</shortName>
    </alternativeName>
    <alternativeName>
        <fullName evidence="1">Dihydroorotate oxidase</fullName>
    </alternativeName>
</protein>
<name>PYRD_VIBVU</name>
<sequence>MLYRLARAGFFQLDAEKAHDLAIQNFKRFTGTPIDLFYRQQLPNRPVECMGLTFRNPVGLAAGLDKNGECIEAFDAMGFGFVEVGTVTPRAQSGNDKPRLFRLVGAEGIINRMGFNNLGVDNLIENVKKAKYSCVLGINIGKNKDTPIEKGAEDYLICMEKVYEYAGYIAVNISSPNTPGLRTLQYGEALDELLVELKRKQAELEEKHGKYVPLALKIAPDLTDDEISQICQSLINNKIDGVIATNTTLDRTMVEGMKHAQEAGGLSGRPLQSRSTEVVRLLRKELQGNIPIIGVGGVDSYVAAKEKMLAGADLVQVYSGFIYHGPGLVRDIVKNL</sequence>
<gene>
    <name evidence="1" type="primary">pyrD</name>
    <name type="ordered locus">VV1_2637</name>
</gene>
<feature type="chain" id="PRO_0000148487" description="Dihydroorotate dehydrogenase (quinone)">
    <location>
        <begin position="1"/>
        <end position="336"/>
    </location>
</feature>
<feature type="active site" description="Nucleophile" evidence="1">
    <location>
        <position position="175"/>
    </location>
</feature>
<feature type="binding site" evidence="1">
    <location>
        <begin position="62"/>
        <end position="66"/>
    </location>
    <ligand>
        <name>FMN</name>
        <dbReference type="ChEBI" id="CHEBI:58210"/>
    </ligand>
</feature>
<feature type="binding site" evidence="1">
    <location>
        <position position="66"/>
    </location>
    <ligand>
        <name>substrate</name>
    </ligand>
</feature>
<feature type="binding site" evidence="1">
    <location>
        <position position="86"/>
    </location>
    <ligand>
        <name>FMN</name>
        <dbReference type="ChEBI" id="CHEBI:58210"/>
    </ligand>
</feature>
<feature type="binding site" evidence="1">
    <location>
        <begin position="111"/>
        <end position="115"/>
    </location>
    <ligand>
        <name>substrate</name>
    </ligand>
</feature>
<feature type="binding site" evidence="1">
    <location>
        <position position="139"/>
    </location>
    <ligand>
        <name>FMN</name>
        <dbReference type="ChEBI" id="CHEBI:58210"/>
    </ligand>
</feature>
<feature type="binding site" evidence="1">
    <location>
        <position position="172"/>
    </location>
    <ligand>
        <name>FMN</name>
        <dbReference type="ChEBI" id="CHEBI:58210"/>
    </ligand>
</feature>
<feature type="binding site" evidence="1">
    <location>
        <position position="172"/>
    </location>
    <ligand>
        <name>substrate</name>
    </ligand>
</feature>
<feature type="binding site" evidence="1">
    <location>
        <position position="177"/>
    </location>
    <ligand>
        <name>substrate</name>
    </ligand>
</feature>
<feature type="binding site" evidence="1">
    <location>
        <position position="217"/>
    </location>
    <ligand>
        <name>FMN</name>
        <dbReference type="ChEBI" id="CHEBI:58210"/>
    </ligand>
</feature>
<feature type="binding site" evidence="1">
    <location>
        <position position="245"/>
    </location>
    <ligand>
        <name>FMN</name>
        <dbReference type="ChEBI" id="CHEBI:58210"/>
    </ligand>
</feature>
<feature type="binding site" evidence="1">
    <location>
        <begin position="246"/>
        <end position="247"/>
    </location>
    <ligand>
        <name>substrate</name>
    </ligand>
</feature>
<feature type="binding site" evidence="1">
    <location>
        <position position="268"/>
    </location>
    <ligand>
        <name>FMN</name>
        <dbReference type="ChEBI" id="CHEBI:58210"/>
    </ligand>
</feature>
<feature type="binding site" evidence="1">
    <location>
        <position position="297"/>
    </location>
    <ligand>
        <name>FMN</name>
        <dbReference type="ChEBI" id="CHEBI:58210"/>
    </ligand>
</feature>
<feature type="binding site" evidence="1">
    <location>
        <begin position="318"/>
        <end position="319"/>
    </location>
    <ligand>
        <name>FMN</name>
        <dbReference type="ChEBI" id="CHEBI:58210"/>
    </ligand>
</feature>